<protein>
    <recommendedName>
        <fullName evidence="1">N-(5'-phosphoribosyl)anthranilate isomerase</fullName>
        <shortName evidence="1">PRAI</shortName>
        <ecNumber evidence="1">5.3.1.24</ecNumber>
    </recommendedName>
</protein>
<dbReference type="EC" id="5.3.1.24" evidence="1"/>
<dbReference type="EMBL" id="CP000924">
    <property type="protein sequence ID" value="ABY94548.1"/>
    <property type="molecule type" value="Genomic_DNA"/>
</dbReference>
<dbReference type="RefSeq" id="WP_012269211.1">
    <property type="nucleotide sequence ID" value="NC_010321.1"/>
</dbReference>
<dbReference type="SMR" id="B0K8T5"/>
<dbReference type="STRING" id="340099.Teth39_0892"/>
<dbReference type="KEGG" id="tpd:Teth39_0892"/>
<dbReference type="eggNOG" id="COG0135">
    <property type="taxonomic scope" value="Bacteria"/>
</dbReference>
<dbReference type="HOGENOM" id="CLU_076364_1_0_9"/>
<dbReference type="UniPathway" id="UPA00035">
    <property type="reaction ID" value="UER00042"/>
</dbReference>
<dbReference type="Proteomes" id="UP000002156">
    <property type="component" value="Chromosome"/>
</dbReference>
<dbReference type="GO" id="GO:0004640">
    <property type="term" value="F:phosphoribosylanthranilate isomerase activity"/>
    <property type="evidence" value="ECO:0007669"/>
    <property type="project" value="UniProtKB-UniRule"/>
</dbReference>
<dbReference type="GO" id="GO:0000162">
    <property type="term" value="P:L-tryptophan biosynthetic process"/>
    <property type="evidence" value="ECO:0007669"/>
    <property type="project" value="UniProtKB-UniRule"/>
</dbReference>
<dbReference type="CDD" id="cd00405">
    <property type="entry name" value="PRAI"/>
    <property type="match status" value="1"/>
</dbReference>
<dbReference type="FunFam" id="3.20.20.70:FF:000075">
    <property type="entry name" value="Tryptophan biosynthesis protein TRP1"/>
    <property type="match status" value="1"/>
</dbReference>
<dbReference type="Gene3D" id="3.20.20.70">
    <property type="entry name" value="Aldolase class I"/>
    <property type="match status" value="1"/>
</dbReference>
<dbReference type="HAMAP" id="MF_00135">
    <property type="entry name" value="PRAI"/>
    <property type="match status" value="1"/>
</dbReference>
<dbReference type="InterPro" id="IPR013785">
    <property type="entry name" value="Aldolase_TIM"/>
</dbReference>
<dbReference type="InterPro" id="IPR001240">
    <property type="entry name" value="PRAI_dom"/>
</dbReference>
<dbReference type="InterPro" id="IPR011060">
    <property type="entry name" value="RibuloseP-bd_barrel"/>
</dbReference>
<dbReference type="InterPro" id="IPR044643">
    <property type="entry name" value="TrpF_fam"/>
</dbReference>
<dbReference type="PANTHER" id="PTHR42894">
    <property type="entry name" value="N-(5'-PHOSPHORIBOSYL)ANTHRANILATE ISOMERASE"/>
    <property type="match status" value="1"/>
</dbReference>
<dbReference type="PANTHER" id="PTHR42894:SF1">
    <property type="entry name" value="N-(5'-PHOSPHORIBOSYL)ANTHRANILATE ISOMERASE"/>
    <property type="match status" value="1"/>
</dbReference>
<dbReference type="Pfam" id="PF00697">
    <property type="entry name" value="PRAI"/>
    <property type="match status" value="1"/>
</dbReference>
<dbReference type="SUPFAM" id="SSF51366">
    <property type="entry name" value="Ribulose-phoshate binding barrel"/>
    <property type="match status" value="1"/>
</dbReference>
<accession>B0K8T5</accession>
<reference key="1">
    <citation type="submission" date="2008-01" db="EMBL/GenBank/DDBJ databases">
        <title>Complete sequence of Thermoanaerobacter pseudethanolicus 39E.</title>
        <authorList>
            <person name="Copeland A."/>
            <person name="Lucas S."/>
            <person name="Lapidus A."/>
            <person name="Barry K."/>
            <person name="Glavina del Rio T."/>
            <person name="Dalin E."/>
            <person name="Tice H."/>
            <person name="Pitluck S."/>
            <person name="Bruce D."/>
            <person name="Goodwin L."/>
            <person name="Saunders E."/>
            <person name="Brettin T."/>
            <person name="Detter J.C."/>
            <person name="Han C."/>
            <person name="Schmutz J."/>
            <person name="Larimer F."/>
            <person name="Land M."/>
            <person name="Hauser L."/>
            <person name="Kyrpides N."/>
            <person name="Lykidis A."/>
            <person name="Hemme C."/>
            <person name="Fields M.W."/>
            <person name="He Z."/>
            <person name="Zhou J."/>
            <person name="Richardson P."/>
        </authorList>
    </citation>
    <scope>NUCLEOTIDE SEQUENCE [LARGE SCALE GENOMIC DNA]</scope>
    <source>
        <strain>ATCC 33223 / DSM 2355 / 39E</strain>
    </source>
</reference>
<keyword id="KW-0028">Amino-acid biosynthesis</keyword>
<keyword id="KW-0057">Aromatic amino acid biosynthesis</keyword>
<keyword id="KW-0413">Isomerase</keyword>
<keyword id="KW-1185">Reference proteome</keyword>
<keyword id="KW-0822">Tryptophan biosynthesis</keyword>
<feature type="chain" id="PRO_1000095945" description="N-(5'-phosphoribosyl)anthranilate isomerase">
    <location>
        <begin position="1"/>
        <end position="203"/>
    </location>
</feature>
<name>TRPF_THEP3</name>
<sequence length="203" mass="23231">MVKVKICGLRRKEDIEYANELKPDYVGFVFAKSKRQIEVEQALDLISLLDKEIKTVGVFVNEPVENALKIAQTLNLDVLQFHGDETQDYIDNFKNFTVWKAIRIKDKEDLEKTKQFKVNSFVFDTLTKNEYGGTGKTFNWKVLKGMELNVPIILAGGLNENNVEEAIKIVDPYAVDVSSGVETEGYKDFKKLKSFIEKVRGIR</sequence>
<comment type="catalytic activity">
    <reaction evidence="1">
        <text>N-(5-phospho-beta-D-ribosyl)anthranilate = 1-(2-carboxyphenylamino)-1-deoxy-D-ribulose 5-phosphate</text>
        <dbReference type="Rhea" id="RHEA:21540"/>
        <dbReference type="ChEBI" id="CHEBI:18277"/>
        <dbReference type="ChEBI" id="CHEBI:58613"/>
        <dbReference type="EC" id="5.3.1.24"/>
    </reaction>
</comment>
<comment type="pathway">
    <text evidence="1">Amino-acid biosynthesis; L-tryptophan biosynthesis; L-tryptophan from chorismate: step 3/5.</text>
</comment>
<comment type="similarity">
    <text evidence="1">Belongs to the TrpF family.</text>
</comment>
<proteinExistence type="inferred from homology"/>
<gene>
    <name evidence="1" type="primary">trpF</name>
    <name type="ordered locus">Teth39_0892</name>
</gene>
<evidence type="ECO:0000255" key="1">
    <source>
        <dbReference type="HAMAP-Rule" id="MF_00135"/>
    </source>
</evidence>
<organism>
    <name type="scientific">Thermoanaerobacter pseudethanolicus (strain ATCC 33223 / 39E)</name>
    <name type="common">Clostridium thermohydrosulfuricum</name>
    <dbReference type="NCBI Taxonomy" id="340099"/>
    <lineage>
        <taxon>Bacteria</taxon>
        <taxon>Bacillati</taxon>
        <taxon>Bacillota</taxon>
        <taxon>Clostridia</taxon>
        <taxon>Thermoanaerobacterales</taxon>
        <taxon>Thermoanaerobacteraceae</taxon>
        <taxon>Thermoanaerobacter</taxon>
    </lineage>
</organism>